<organism>
    <name type="scientific">Carassius auratus</name>
    <name type="common">Goldfish</name>
    <dbReference type="NCBI Taxonomy" id="7957"/>
    <lineage>
        <taxon>Eukaryota</taxon>
        <taxon>Metazoa</taxon>
        <taxon>Chordata</taxon>
        <taxon>Craniata</taxon>
        <taxon>Vertebrata</taxon>
        <taxon>Euteleostomi</taxon>
        <taxon>Actinopterygii</taxon>
        <taxon>Neopterygii</taxon>
        <taxon>Teleostei</taxon>
        <taxon>Ostariophysi</taxon>
        <taxon>Cypriniformes</taxon>
        <taxon>Cyprinidae</taxon>
        <taxon>Cyprininae</taxon>
        <taxon>Carassius</taxon>
    </lineage>
</organism>
<protein>
    <recommendedName>
        <fullName>Flotillin-1</fullName>
    </recommendedName>
    <alternativeName>
        <fullName>Reggie-2</fullName>
        <shortName>REG-2</shortName>
    </alternativeName>
</protein>
<keyword id="KW-1003">Cell membrane</keyword>
<keyword id="KW-0903">Direct protein sequencing</keyword>
<keyword id="KW-0967">Endosome</keyword>
<keyword id="KW-0472">Membrane</keyword>
<keyword id="KW-1185">Reference proteome</keyword>
<sequence>MFYTCGPNEAMVVSGFCRSPPVMISGGSVFVFPCVQQIQRISLNTLTLNVKSDKVYTRHGVPVSVTGIAQMKIQGQNKQMLAAKCQMFLGKSESDIAHIALETLEGHQRAIIAHLTVEEIYKDRKKFSEQVFKVASSDLFNMGISVVSYTLKDVHDDQDYLHSLGKARTAQVQKDARIGEAKNKRDAVIREANAIQEKVSAQYMNEIEMAKAQRDYELKKAVYDIEVCTKKAESEMAYQLQVAKTKQQIEEEKMQVMVVERSQQIMLQEQEIARKEKELEAQVMKPADAERYRLEKLAEAERLQLIMEAEAEAESIKMRGEAEAYAVEARGRAEAEQMAKKAEAFQTYKEGAMVDMLMEKLPLIAEEISKPLSATNKVTMVSSGGSEIGAAKLTGEVLDIMTKLPETIEKLTGVSISQVARTG</sequence>
<gene>
    <name type="primary">flot1</name>
</gene>
<feature type="chain" id="PRO_0000094048" description="Flotillin-1">
    <location>
        <begin position="1"/>
        <end position="423"/>
    </location>
</feature>
<name>FLOT1_CARAU</name>
<evidence type="ECO:0000250" key="1"/>
<evidence type="ECO:0000250" key="2">
    <source>
        <dbReference type="UniProtKB" id="O08917"/>
    </source>
</evidence>
<evidence type="ECO:0000250" key="3">
    <source>
        <dbReference type="UniProtKB" id="O75955"/>
    </source>
</evidence>
<evidence type="ECO:0000305" key="4"/>
<proteinExistence type="evidence at protein level"/>
<accession>O13127</accession>
<reference key="1">
    <citation type="journal article" date="1997" name="Development">
        <title>Reggie-1 and reggie-2, two cell surface proteins expressed by retinal ganglion cells during axon regeneration.</title>
        <authorList>
            <person name="Schulte T."/>
            <person name="Paschke K.A."/>
            <person name="Laessing U."/>
            <person name="Lottspeich F."/>
            <person name="Stuermer C.A.O."/>
        </authorList>
    </citation>
    <scope>NUCLEOTIDE SEQUENCE [MRNA]</scope>
    <scope>PROTEIN SEQUENCE OF 1-15 AND 331-340</scope>
    <source>
        <tissue>Embryo</tissue>
        <tissue>Larva</tissue>
        <tissue>Retina</tissue>
    </source>
</reference>
<comment type="function">
    <text evidence="1">May act as a scaffolding protein within caveolar membranes, functionally participating in formation of caveolae or caveolae-like vesicles.</text>
</comment>
<comment type="subunit">
    <text evidence="1">Heterooligomeric complex of flotillin-1 and flotillin-2 and caveolin-1 and caveolin-2.</text>
</comment>
<comment type="subcellular location">
    <subcellularLocation>
        <location evidence="3">Cell membrane</location>
        <topology evidence="3">Peripheral membrane protein</topology>
    </subcellularLocation>
    <subcellularLocation>
        <location evidence="3">Endosome</location>
    </subcellularLocation>
    <subcellularLocation>
        <location evidence="2">Membrane</location>
        <location evidence="2">Caveola</location>
        <topology evidence="2">Peripheral membrane protein</topology>
    </subcellularLocation>
    <subcellularLocation>
        <location evidence="3">Melanosome</location>
    </subcellularLocation>
    <subcellularLocation>
        <location evidence="3">Membrane raft</location>
    </subcellularLocation>
    <text evidence="2 3">Identified by mass spectrometry in melanosome fractions from stage I to stage IV. Membrane-associated protein of caveola.</text>
</comment>
<comment type="tissue specificity">
    <text>Normally expressed in growing retinal exons of newly differentiated ganglion cells at the retinal margin. After optic nerve injury, expressed in all retinal ganglion cells and retinal axons. Also expressed in endothelial cells, spinal cord, larval and adult skin, muscle processes, thymus and gill macrophages.</text>
</comment>
<comment type="induction">
    <text>By optic nerve injury.</text>
</comment>
<comment type="similarity">
    <text evidence="4">Belongs to the band 7/mec-2 family. Flotillin subfamily.</text>
</comment>
<dbReference type="EMBL" id="U33556">
    <property type="protein sequence ID" value="AAC60211.1"/>
    <property type="molecule type" value="mRNA"/>
</dbReference>
<dbReference type="SMR" id="O13127"/>
<dbReference type="Proteomes" id="UP000515129">
    <property type="component" value="Unplaced"/>
</dbReference>
<dbReference type="GO" id="GO:0005737">
    <property type="term" value="C:cytoplasm"/>
    <property type="evidence" value="ECO:0000314"/>
    <property type="project" value="AgBase"/>
</dbReference>
<dbReference type="GO" id="GO:0005768">
    <property type="term" value="C:endosome"/>
    <property type="evidence" value="ECO:0000250"/>
    <property type="project" value="UniProtKB"/>
</dbReference>
<dbReference type="GO" id="GO:0016600">
    <property type="term" value="C:flotillin complex"/>
    <property type="evidence" value="ECO:0007669"/>
    <property type="project" value="TreeGrafter"/>
</dbReference>
<dbReference type="GO" id="GO:0042470">
    <property type="term" value="C:melanosome"/>
    <property type="evidence" value="ECO:0007669"/>
    <property type="project" value="UniProtKB-SubCell"/>
</dbReference>
<dbReference type="GO" id="GO:0045121">
    <property type="term" value="C:membrane raft"/>
    <property type="evidence" value="ECO:0000314"/>
    <property type="project" value="AgBase"/>
</dbReference>
<dbReference type="GO" id="GO:0005886">
    <property type="term" value="C:plasma membrane"/>
    <property type="evidence" value="ECO:0000314"/>
    <property type="project" value="AgBase"/>
</dbReference>
<dbReference type="GO" id="GO:0002020">
    <property type="term" value="F:protease binding"/>
    <property type="evidence" value="ECO:0007669"/>
    <property type="project" value="TreeGrafter"/>
</dbReference>
<dbReference type="GO" id="GO:1901890">
    <property type="term" value="P:positive regulation of cell junction assembly"/>
    <property type="evidence" value="ECO:0007669"/>
    <property type="project" value="TreeGrafter"/>
</dbReference>
<dbReference type="GO" id="GO:2000049">
    <property type="term" value="P:positive regulation of cell-cell adhesion mediated by cadherin"/>
    <property type="evidence" value="ECO:0007669"/>
    <property type="project" value="TreeGrafter"/>
</dbReference>
<dbReference type="GO" id="GO:0045807">
    <property type="term" value="P:positive regulation of endocytosis"/>
    <property type="evidence" value="ECO:0007669"/>
    <property type="project" value="TreeGrafter"/>
</dbReference>
<dbReference type="GO" id="GO:0070528">
    <property type="term" value="P:protein kinase C signaling"/>
    <property type="evidence" value="ECO:0007669"/>
    <property type="project" value="TreeGrafter"/>
</dbReference>
<dbReference type="GO" id="GO:0072659">
    <property type="term" value="P:protein localization to plasma membrane"/>
    <property type="evidence" value="ECO:0007669"/>
    <property type="project" value="TreeGrafter"/>
</dbReference>
<dbReference type="GO" id="GO:0002090">
    <property type="term" value="P:regulation of receptor internalization"/>
    <property type="evidence" value="ECO:0007669"/>
    <property type="project" value="TreeGrafter"/>
</dbReference>
<dbReference type="CDD" id="cd03399">
    <property type="entry name" value="SPFH_flotillin"/>
    <property type="match status" value="1"/>
</dbReference>
<dbReference type="FunFam" id="3.30.479.30:FF:000003">
    <property type="entry name" value="Flotillin 2"/>
    <property type="match status" value="1"/>
</dbReference>
<dbReference type="Gene3D" id="3.30.479.30">
    <property type="entry name" value="Band 7 domain"/>
    <property type="match status" value="1"/>
</dbReference>
<dbReference type="InterPro" id="IPR001107">
    <property type="entry name" value="Band_7"/>
</dbReference>
<dbReference type="InterPro" id="IPR036013">
    <property type="entry name" value="Band_7/SPFH_dom_sf"/>
</dbReference>
<dbReference type="InterPro" id="IPR031905">
    <property type="entry name" value="Flotillin_C"/>
</dbReference>
<dbReference type="InterPro" id="IPR027705">
    <property type="entry name" value="Flotillin_fam"/>
</dbReference>
<dbReference type="PANTHER" id="PTHR13806:SF33">
    <property type="entry name" value="FLOTILLIN"/>
    <property type="match status" value="1"/>
</dbReference>
<dbReference type="PANTHER" id="PTHR13806">
    <property type="entry name" value="FLOTILLIN-RELATED"/>
    <property type="match status" value="1"/>
</dbReference>
<dbReference type="Pfam" id="PF01145">
    <property type="entry name" value="Band_7"/>
    <property type="match status" value="1"/>
</dbReference>
<dbReference type="Pfam" id="PF15975">
    <property type="entry name" value="Flot"/>
    <property type="match status" value="1"/>
</dbReference>
<dbReference type="SMART" id="SM00244">
    <property type="entry name" value="PHB"/>
    <property type="match status" value="1"/>
</dbReference>
<dbReference type="SUPFAM" id="SSF117892">
    <property type="entry name" value="Band 7/SPFH domain"/>
    <property type="match status" value="1"/>
</dbReference>